<accession>Q3BUC6</accession>
<keyword id="KW-0028">Amino-acid biosynthesis</keyword>
<keyword id="KW-0963">Cytoplasm</keyword>
<keyword id="KW-0220">Diaminopimelate biosynthesis</keyword>
<keyword id="KW-0457">Lysine biosynthesis</keyword>
<keyword id="KW-0520">NAD</keyword>
<keyword id="KW-0521">NADP</keyword>
<keyword id="KW-0560">Oxidoreductase</keyword>
<proteinExistence type="inferred from homology"/>
<sequence>MTTSAVKVLIHGASGRMGKALLRLAAEDQTLQVVGAVVGRSPSQRVVDGVPFFAASELGGAPAFDVAIDFSLPQGFAPILALCAQRGKPLVSGTTGLDEAQRAALRDAAQQIALVWASNFSLGVAVLTELVERAAGTLPGWDCDILEAHHVHKQDAPSGTALTLGEAATGSGAQPRYVSLRAGDIVGEHTVQFTGLGERVELVHRATNRDIFARGALHAAKLLIGKPAGSYRVRDLVL</sequence>
<protein>
    <recommendedName>
        <fullName evidence="1">4-hydroxy-tetrahydrodipicolinate reductase</fullName>
        <shortName evidence="1">HTPA reductase</shortName>
        <ecNumber evidence="1">1.17.1.8</ecNumber>
    </recommendedName>
</protein>
<organism>
    <name type="scientific">Xanthomonas euvesicatoria pv. vesicatoria (strain 85-10)</name>
    <name type="common">Xanthomonas campestris pv. vesicatoria</name>
    <dbReference type="NCBI Taxonomy" id="316273"/>
    <lineage>
        <taxon>Bacteria</taxon>
        <taxon>Pseudomonadati</taxon>
        <taxon>Pseudomonadota</taxon>
        <taxon>Gammaproteobacteria</taxon>
        <taxon>Lysobacterales</taxon>
        <taxon>Lysobacteraceae</taxon>
        <taxon>Xanthomonas</taxon>
    </lineage>
</organism>
<evidence type="ECO:0000255" key="1">
    <source>
        <dbReference type="HAMAP-Rule" id="MF_00102"/>
    </source>
</evidence>
<evidence type="ECO:0000305" key="2"/>
<feature type="chain" id="PRO_0000228403" description="4-hydroxy-tetrahydrodipicolinate reductase">
    <location>
        <begin position="1"/>
        <end position="238"/>
    </location>
</feature>
<feature type="active site" description="Proton donor/acceptor" evidence="1">
    <location>
        <position position="149"/>
    </location>
</feature>
<feature type="active site" description="Proton donor" evidence="1">
    <location>
        <position position="153"/>
    </location>
</feature>
<feature type="binding site" evidence="1">
    <location>
        <begin position="12"/>
        <end position="17"/>
    </location>
    <ligand>
        <name>NAD(+)</name>
        <dbReference type="ChEBI" id="CHEBI:57540"/>
    </ligand>
</feature>
<feature type="binding site" evidence="1">
    <location>
        <position position="40"/>
    </location>
    <ligand>
        <name>NADP(+)</name>
        <dbReference type="ChEBI" id="CHEBI:58349"/>
    </ligand>
</feature>
<feature type="binding site" evidence="1">
    <location>
        <begin position="93"/>
        <end position="95"/>
    </location>
    <ligand>
        <name>NAD(+)</name>
        <dbReference type="ChEBI" id="CHEBI:57540"/>
    </ligand>
</feature>
<feature type="binding site" evidence="1">
    <location>
        <begin position="117"/>
        <end position="120"/>
    </location>
    <ligand>
        <name>NAD(+)</name>
        <dbReference type="ChEBI" id="CHEBI:57540"/>
    </ligand>
</feature>
<feature type="binding site" evidence="1">
    <location>
        <position position="150"/>
    </location>
    <ligand>
        <name>(S)-2,3,4,5-tetrahydrodipicolinate</name>
        <dbReference type="ChEBI" id="CHEBI:16845"/>
    </ligand>
</feature>
<feature type="binding site" evidence="1">
    <location>
        <begin position="159"/>
        <end position="160"/>
    </location>
    <ligand>
        <name>(S)-2,3,4,5-tetrahydrodipicolinate</name>
        <dbReference type="ChEBI" id="CHEBI:16845"/>
    </ligand>
</feature>
<comment type="function">
    <text evidence="1">Catalyzes the conversion of 4-hydroxy-tetrahydrodipicolinate (HTPA) to tetrahydrodipicolinate.</text>
</comment>
<comment type="catalytic activity">
    <reaction evidence="1">
        <text>(S)-2,3,4,5-tetrahydrodipicolinate + NAD(+) + H2O = (2S,4S)-4-hydroxy-2,3,4,5-tetrahydrodipicolinate + NADH + H(+)</text>
        <dbReference type="Rhea" id="RHEA:35323"/>
        <dbReference type="ChEBI" id="CHEBI:15377"/>
        <dbReference type="ChEBI" id="CHEBI:15378"/>
        <dbReference type="ChEBI" id="CHEBI:16845"/>
        <dbReference type="ChEBI" id="CHEBI:57540"/>
        <dbReference type="ChEBI" id="CHEBI:57945"/>
        <dbReference type="ChEBI" id="CHEBI:67139"/>
        <dbReference type="EC" id="1.17.1.8"/>
    </reaction>
</comment>
<comment type="catalytic activity">
    <reaction evidence="1">
        <text>(S)-2,3,4,5-tetrahydrodipicolinate + NADP(+) + H2O = (2S,4S)-4-hydroxy-2,3,4,5-tetrahydrodipicolinate + NADPH + H(+)</text>
        <dbReference type="Rhea" id="RHEA:35331"/>
        <dbReference type="ChEBI" id="CHEBI:15377"/>
        <dbReference type="ChEBI" id="CHEBI:15378"/>
        <dbReference type="ChEBI" id="CHEBI:16845"/>
        <dbReference type="ChEBI" id="CHEBI:57783"/>
        <dbReference type="ChEBI" id="CHEBI:58349"/>
        <dbReference type="ChEBI" id="CHEBI:67139"/>
        <dbReference type="EC" id="1.17.1.8"/>
    </reaction>
</comment>
<comment type="pathway">
    <text evidence="1">Amino-acid biosynthesis; L-lysine biosynthesis via DAP pathway; (S)-tetrahydrodipicolinate from L-aspartate: step 4/4.</text>
</comment>
<comment type="subcellular location">
    <subcellularLocation>
        <location evidence="1">Cytoplasm</location>
    </subcellularLocation>
</comment>
<comment type="similarity">
    <text evidence="1">Belongs to the DapB family.</text>
</comment>
<comment type="caution">
    <text evidence="2">Was originally thought to be a dihydrodipicolinate reductase (DHDPR), catalyzing the conversion of dihydrodipicolinate to tetrahydrodipicolinate. However, it was shown in E.coli that the substrate of the enzymatic reaction is not dihydrodipicolinate (DHDP) but in fact (2S,4S)-4-hydroxy-2,3,4,5-tetrahydrodipicolinic acid (HTPA), the product released by the DapA-catalyzed reaction.</text>
</comment>
<gene>
    <name evidence="1" type="primary">dapB</name>
    <name type="ordered locus">XCV1906</name>
</gene>
<reference key="1">
    <citation type="journal article" date="2005" name="J. Bacteriol.">
        <title>Insights into genome plasticity and pathogenicity of the plant pathogenic Bacterium Xanthomonas campestris pv. vesicatoria revealed by the complete genome sequence.</title>
        <authorList>
            <person name="Thieme F."/>
            <person name="Koebnik R."/>
            <person name="Bekel T."/>
            <person name="Berger C."/>
            <person name="Boch J."/>
            <person name="Buettner D."/>
            <person name="Caldana C."/>
            <person name="Gaigalat L."/>
            <person name="Goesmann A."/>
            <person name="Kay S."/>
            <person name="Kirchner O."/>
            <person name="Lanz C."/>
            <person name="Linke B."/>
            <person name="McHardy A.C."/>
            <person name="Meyer F."/>
            <person name="Mittenhuber G."/>
            <person name="Nies D.H."/>
            <person name="Niesbach-Kloesgen U."/>
            <person name="Patschkowski T."/>
            <person name="Rueckert C."/>
            <person name="Rupp O."/>
            <person name="Schneiker S."/>
            <person name="Schuster S.C."/>
            <person name="Vorhoelter F.J."/>
            <person name="Weber E."/>
            <person name="Puehler A."/>
            <person name="Bonas U."/>
            <person name="Bartels D."/>
            <person name="Kaiser O."/>
        </authorList>
    </citation>
    <scope>NUCLEOTIDE SEQUENCE [LARGE SCALE GENOMIC DNA]</scope>
    <source>
        <strain>85-10</strain>
    </source>
</reference>
<dbReference type="EC" id="1.17.1.8" evidence="1"/>
<dbReference type="EMBL" id="AM039952">
    <property type="protein sequence ID" value="CAJ23583.1"/>
    <property type="molecule type" value="Genomic_DNA"/>
</dbReference>
<dbReference type="RefSeq" id="WP_011347204.1">
    <property type="nucleotide sequence ID" value="NZ_CP017190.1"/>
</dbReference>
<dbReference type="SMR" id="Q3BUC6"/>
<dbReference type="STRING" id="456327.BJD11_12890"/>
<dbReference type="KEGG" id="xcv:XCV1906"/>
<dbReference type="eggNOG" id="COG0289">
    <property type="taxonomic scope" value="Bacteria"/>
</dbReference>
<dbReference type="HOGENOM" id="CLU_047479_2_1_6"/>
<dbReference type="UniPathway" id="UPA00034">
    <property type="reaction ID" value="UER00018"/>
</dbReference>
<dbReference type="Proteomes" id="UP000007069">
    <property type="component" value="Chromosome"/>
</dbReference>
<dbReference type="GO" id="GO:0005829">
    <property type="term" value="C:cytosol"/>
    <property type="evidence" value="ECO:0007669"/>
    <property type="project" value="TreeGrafter"/>
</dbReference>
<dbReference type="GO" id="GO:0008839">
    <property type="term" value="F:4-hydroxy-tetrahydrodipicolinate reductase"/>
    <property type="evidence" value="ECO:0007669"/>
    <property type="project" value="UniProtKB-EC"/>
</dbReference>
<dbReference type="GO" id="GO:0051287">
    <property type="term" value="F:NAD binding"/>
    <property type="evidence" value="ECO:0007669"/>
    <property type="project" value="UniProtKB-UniRule"/>
</dbReference>
<dbReference type="GO" id="GO:0050661">
    <property type="term" value="F:NADP binding"/>
    <property type="evidence" value="ECO:0007669"/>
    <property type="project" value="UniProtKB-UniRule"/>
</dbReference>
<dbReference type="GO" id="GO:0016726">
    <property type="term" value="F:oxidoreductase activity, acting on CH or CH2 groups, NAD or NADP as acceptor"/>
    <property type="evidence" value="ECO:0007669"/>
    <property type="project" value="UniProtKB-UniRule"/>
</dbReference>
<dbReference type="GO" id="GO:0019877">
    <property type="term" value="P:diaminopimelate biosynthetic process"/>
    <property type="evidence" value="ECO:0007669"/>
    <property type="project" value="UniProtKB-UniRule"/>
</dbReference>
<dbReference type="GO" id="GO:0009089">
    <property type="term" value="P:lysine biosynthetic process via diaminopimelate"/>
    <property type="evidence" value="ECO:0007669"/>
    <property type="project" value="UniProtKB-UniRule"/>
</dbReference>
<dbReference type="CDD" id="cd02274">
    <property type="entry name" value="DHDPR_N"/>
    <property type="match status" value="1"/>
</dbReference>
<dbReference type="Gene3D" id="3.30.360.10">
    <property type="entry name" value="Dihydrodipicolinate Reductase, domain 2"/>
    <property type="match status" value="1"/>
</dbReference>
<dbReference type="Gene3D" id="3.40.50.720">
    <property type="entry name" value="NAD(P)-binding Rossmann-like Domain"/>
    <property type="match status" value="1"/>
</dbReference>
<dbReference type="HAMAP" id="MF_00102">
    <property type="entry name" value="DapB"/>
    <property type="match status" value="1"/>
</dbReference>
<dbReference type="InterPro" id="IPR022663">
    <property type="entry name" value="DapB_C"/>
</dbReference>
<dbReference type="InterPro" id="IPR000846">
    <property type="entry name" value="DapB_N"/>
</dbReference>
<dbReference type="InterPro" id="IPR022664">
    <property type="entry name" value="DapB_N_CS"/>
</dbReference>
<dbReference type="InterPro" id="IPR023940">
    <property type="entry name" value="DHDPR_bac"/>
</dbReference>
<dbReference type="InterPro" id="IPR036291">
    <property type="entry name" value="NAD(P)-bd_dom_sf"/>
</dbReference>
<dbReference type="NCBIfam" id="TIGR00036">
    <property type="entry name" value="dapB"/>
    <property type="match status" value="1"/>
</dbReference>
<dbReference type="PANTHER" id="PTHR20836:SF0">
    <property type="entry name" value="4-HYDROXY-TETRAHYDRODIPICOLINATE REDUCTASE 1, CHLOROPLASTIC-RELATED"/>
    <property type="match status" value="1"/>
</dbReference>
<dbReference type="PANTHER" id="PTHR20836">
    <property type="entry name" value="DIHYDRODIPICOLINATE REDUCTASE"/>
    <property type="match status" value="1"/>
</dbReference>
<dbReference type="Pfam" id="PF05173">
    <property type="entry name" value="DapB_C"/>
    <property type="match status" value="1"/>
</dbReference>
<dbReference type="Pfam" id="PF01113">
    <property type="entry name" value="DapB_N"/>
    <property type="match status" value="1"/>
</dbReference>
<dbReference type="PIRSF" id="PIRSF000161">
    <property type="entry name" value="DHPR"/>
    <property type="match status" value="1"/>
</dbReference>
<dbReference type="SUPFAM" id="SSF55347">
    <property type="entry name" value="Glyceraldehyde-3-phosphate dehydrogenase-like, C-terminal domain"/>
    <property type="match status" value="1"/>
</dbReference>
<dbReference type="SUPFAM" id="SSF51735">
    <property type="entry name" value="NAD(P)-binding Rossmann-fold domains"/>
    <property type="match status" value="1"/>
</dbReference>
<dbReference type="PROSITE" id="PS01298">
    <property type="entry name" value="DAPB"/>
    <property type="match status" value="1"/>
</dbReference>
<name>DAPB_XANE5</name>